<gene>
    <name evidence="1" type="primary">apaH</name>
    <name type="ordered locus">UTI89_C0056</name>
</gene>
<feature type="chain" id="PRO_1000012059" description="Bis(5'-nucleosyl)-tetraphosphatase, symmetrical">
    <location>
        <begin position="1"/>
        <end position="282"/>
    </location>
</feature>
<name>APAH_ECOUT</name>
<sequence length="282" mass="31567">MATYLIGDVHGCYDELIALLHKVEFTPGKDTLWLTGDLVARGPGSLDVLRYVKSLGDSVRLVLGNHDLHLLAVFAGISRNKPKDRLTPLLEAPDADELLNWLRRQPLLQIDKEKKLVMAHAGITPQWDLQTAKECARDVEAVLSSDSYPFFLDAMYGDMPNNWSPELRGLGRLRFITNAFTRMRFCFPNGQLDMYSKESPEEAPAPLKPWFAIPGPVAEEYNIAFGHWASLEGKGTPEGIYALDTGCCWGGTLTCLRWEDKQYFVQPSNRHKDLSEGEAVAS</sequence>
<proteinExistence type="inferred from homology"/>
<evidence type="ECO:0000255" key="1">
    <source>
        <dbReference type="HAMAP-Rule" id="MF_00199"/>
    </source>
</evidence>
<reference key="1">
    <citation type="journal article" date="2006" name="Proc. Natl. Acad. Sci. U.S.A.">
        <title>Identification of genes subject to positive selection in uropathogenic strains of Escherichia coli: a comparative genomics approach.</title>
        <authorList>
            <person name="Chen S.L."/>
            <person name="Hung C.-S."/>
            <person name="Xu J."/>
            <person name="Reigstad C.S."/>
            <person name="Magrini V."/>
            <person name="Sabo A."/>
            <person name="Blasiar D."/>
            <person name="Bieri T."/>
            <person name="Meyer R.R."/>
            <person name="Ozersky P."/>
            <person name="Armstrong J.R."/>
            <person name="Fulton R.S."/>
            <person name="Latreille J.P."/>
            <person name="Spieth J."/>
            <person name="Hooton T.M."/>
            <person name="Mardis E.R."/>
            <person name="Hultgren S.J."/>
            <person name="Gordon J.I."/>
        </authorList>
    </citation>
    <scope>NUCLEOTIDE SEQUENCE [LARGE SCALE GENOMIC DNA]</scope>
    <source>
        <strain>UTI89 / UPEC</strain>
    </source>
</reference>
<protein>
    <recommendedName>
        <fullName evidence="1">Bis(5'-nucleosyl)-tetraphosphatase, symmetrical</fullName>
        <ecNumber evidence="1">3.6.1.41</ecNumber>
    </recommendedName>
    <alternativeName>
        <fullName evidence="1">Ap4A hydrolase</fullName>
    </alternativeName>
    <alternativeName>
        <fullName evidence="1">Diadenosine 5',5'''-P1,P4-tetraphosphate pyrophosphohydrolase</fullName>
    </alternativeName>
    <alternativeName>
        <fullName evidence="1">Diadenosine tetraphosphatase</fullName>
    </alternativeName>
</protein>
<comment type="function">
    <text evidence="1">Hydrolyzes diadenosine 5',5'''-P1,P4-tetraphosphate to yield ADP.</text>
</comment>
<comment type="catalytic activity">
    <reaction evidence="1">
        <text>P(1),P(4)-bis(5'-adenosyl) tetraphosphate + H2O = 2 ADP + 2 H(+)</text>
        <dbReference type="Rhea" id="RHEA:24252"/>
        <dbReference type="ChEBI" id="CHEBI:15377"/>
        <dbReference type="ChEBI" id="CHEBI:15378"/>
        <dbReference type="ChEBI" id="CHEBI:58141"/>
        <dbReference type="ChEBI" id="CHEBI:456216"/>
        <dbReference type="EC" id="3.6.1.41"/>
    </reaction>
</comment>
<comment type="similarity">
    <text evidence="1">Belongs to the Ap4A hydrolase family.</text>
</comment>
<organism>
    <name type="scientific">Escherichia coli (strain UTI89 / UPEC)</name>
    <dbReference type="NCBI Taxonomy" id="364106"/>
    <lineage>
        <taxon>Bacteria</taxon>
        <taxon>Pseudomonadati</taxon>
        <taxon>Pseudomonadota</taxon>
        <taxon>Gammaproteobacteria</taxon>
        <taxon>Enterobacterales</taxon>
        <taxon>Enterobacteriaceae</taxon>
        <taxon>Escherichia</taxon>
    </lineage>
</organism>
<accession>Q1RGE8</accession>
<dbReference type="EC" id="3.6.1.41" evidence="1"/>
<dbReference type="EMBL" id="CP000243">
    <property type="protein sequence ID" value="ABE05566.1"/>
    <property type="molecule type" value="Genomic_DNA"/>
</dbReference>
<dbReference type="RefSeq" id="WP_000257201.1">
    <property type="nucleotide sequence ID" value="NZ_CP064825.1"/>
</dbReference>
<dbReference type="SMR" id="Q1RGE8"/>
<dbReference type="KEGG" id="eci:UTI89_C0056"/>
<dbReference type="HOGENOM" id="CLU_056184_2_0_6"/>
<dbReference type="Proteomes" id="UP000001952">
    <property type="component" value="Chromosome"/>
</dbReference>
<dbReference type="GO" id="GO:0008803">
    <property type="term" value="F:bis(5'-nucleosyl)-tetraphosphatase (symmetrical) activity"/>
    <property type="evidence" value="ECO:0007669"/>
    <property type="project" value="UniProtKB-UniRule"/>
</dbReference>
<dbReference type="CDD" id="cd07422">
    <property type="entry name" value="MPP_ApaH"/>
    <property type="match status" value="1"/>
</dbReference>
<dbReference type="FunFam" id="3.60.21.10:FF:000013">
    <property type="entry name" value="Bis(5'-nucleosyl)-tetraphosphatase, symmetrical"/>
    <property type="match status" value="1"/>
</dbReference>
<dbReference type="Gene3D" id="3.60.21.10">
    <property type="match status" value="1"/>
</dbReference>
<dbReference type="HAMAP" id="MF_00199">
    <property type="entry name" value="ApaH"/>
    <property type="match status" value="1"/>
</dbReference>
<dbReference type="InterPro" id="IPR004617">
    <property type="entry name" value="ApaH"/>
</dbReference>
<dbReference type="InterPro" id="IPR004843">
    <property type="entry name" value="Calcineurin-like_PHP_ApaH"/>
</dbReference>
<dbReference type="InterPro" id="IPR029052">
    <property type="entry name" value="Metallo-depent_PP-like"/>
</dbReference>
<dbReference type="NCBIfam" id="TIGR00668">
    <property type="entry name" value="apaH"/>
    <property type="match status" value="1"/>
</dbReference>
<dbReference type="NCBIfam" id="NF001204">
    <property type="entry name" value="PRK00166.1"/>
    <property type="match status" value="1"/>
</dbReference>
<dbReference type="PANTHER" id="PTHR40942">
    <property type="match status" value="1"/>
</dbReference>
<dbReference type="PANTHER" id="PTHR40942:SF4">
    <property type="entry name" value="CYTOCHROME C5"/>
    <property type="match status" value="1"/>
</dbReference>
<dbReference type="Pfam" id="PF00149">
    <property type="entry name" value="Metallophos"/>
    <property type="match status" value="1"/>
</dbReference>
<dbReference type="PIRSF" id="PIRSF000903">
    <property type="entry name" value="B5n-ttraPtase_sm"/>
    <property type="match status" value="1"/>
</dbReference>
<dbReference type="SUPFAM" id="SSF56300">
    <property type="entry name" value="Metallo-dependent phosphatases"/>
    <property type="match status" value="1"/>
</dbReference>
<keyword id="KW-0378">Hydrolase</keyword>